<comment type="function">
    <text evidence="2">Potent pro-inflammatory cytokine. Initially discovered as the major endogenous pyrogen, induces prostaglandin synthesis, neutrophil influx and activation, T-cell activation and cytokine production, B-cell activation and antibody production, and fibroblast proliferation and collagen production. Promotes Th17 differentiation of T-cells. Synergizes with IL12/interleukin-12 to induce IFNG synthesis from T-helper 1 (Th1) cells. Plays a role in angiogenesis by inducing VEGF production synergistically with TNF and IL6. Involved in transduction of inflammation downstream of pyroptosis: its mature form is specifically released in the extracellular milieu by passing through the gasdermin-D (GSDMD) pore.</text>
</comment>
<comment type="subunit">
    <text evidence="2">Monomer. In its precursor form, weakly interacts with full-length MEFV; the mature cytokine does not interact at all. Interacts with integrins ITGAV:ITGBV and ITGA5:ITGB1; integrin-binding is required for IL1B signaling. Interacts with cargo receptor TMED10; the interaction is direct and is required for the secretion of IL1B mature form. Interacts with HSP90AB1; the interaction facilitates cargo translocation into the ERGIC. Interacts with HSP90B1; the interaction facilitates cargo translocation into the ERGIC.</text>
</comment>
<comment type="subcellular location">
    <subcellularLocation>
        <location evidence="2">Cytoplasm</location>
        <location evidence="2">Cytosol</location>
    </subcellularLocation>
    <subcellularLocation>
        <location evidence="2">Secreted</location>
    </subcellularLocation>
    <subcellularLocation>
        <location evidence="2">Lysosome</location>
    </subcellularLocation>
    <subcellularLocation>
        <location evidence="3">Secreted</location>
        <location evidence="3">Extracellular exosome</location>
    </subcellularLocation>
    <text evidence="2">The precursor is cytosolic. In response to inflammasome-activating signals, such as ATP for NLRP3 inflammasome or bacterial flagellin for NLRC4 inflammasome, cleaved and secreted. Mature form is secreted and released in the extracellular milieu by passing through the gasdermin-D (GSDMD) pore. In contrast, the precursor form is not released, due to the presence of an acidic region that is proteolytically removed by CASP1 during maturation. The secretion is dependent on protein unfolding and facilitated by the cargo receptor TMED10.</text>
</comment>
<comment type="miscellaneous">
    <text evidence="1">IL1B production occurs in 2 steps, each being controlled by different stimuli. First, inflammatory signals, such as LPS, stimulate the synthesis and promote the accumulation of cytosolic stores of pro-IL1B (priming). Then additional signals are required for inflammasome assembly, leading to CASP1 activation, pro-IL1B processing and eventually secretion of the active cytokine. IL1B processing and secretion are temporarily associated.</text>
</comment>
<comment type="similarity">
    <text evidence="4">Belongs to the IL-1 family.</text>
</comment>
<organism>
    <name type="scientific">Cavia porcellus</name>
    <name type="common">Guinea pig</name>
    <dbReference type="NCBI Taxonomy" id="10141"/>
    <lineage>
        <taxon>Eukaryota</taxon>
        <taxon>Metazoa</taxon>
        <taxon>Chordata</taxon>
        <taxon>Craniata</taxon>
        <taxon>Vertebrata</taxon>
        <taxon>Euteleostomi</taxon>
        <taxon>Mammalia</taxon>
        <taxon>Eutheria</taxon>
        <taxon>Euarchontoglires</taxon>
        <taxon>Glires</taxon>
        <taxon>Rodentia</taxon>
        <taxon>Hystricomorpha</taxon>
        <taxon>Caviidae</taxon>
        <taxon>Cavia</taxon>
    </lineage>
</organism>
<evidence type="ECO:0000250" key="1"/>
<evidence type="ECO:0000250" key="2">
    <source>
        <dbReference type="UniProtKB" id="P01584"/>
    </source>
</evidence>
<evidence type="ECO:0000250" key="3">
    <source>
        <dbReference type="UniProtKB" id="P10749"/>
    </source>
</evidence>
<evidence type="ECO:0000305" key="4"/>
<protein>
    <recommendedName>
        <fullName>Interleukin-1 beta</fullName>
        <shortName>IL-1 beta</shortName>
    </recommendedName>
</protein>
<proteinExistence type="evidence at transcript level"/>
<accession>Q9WVG1</accession>
<dbReference type="EMBL" id="AF119622">
    <property type="protein sequence ID" value="AAD38502.1"/>
    <property type="molecule type" value="mRNA"/>
</dbReference>
<dbReference type="RefSeq" id="NP_001166439.1">
    <property type="nucleotide sequence ID" value="NM_001172968.1"/>
</dbReference>
<dbReference type="RefSeq" id="XP_013002735.1">
    <property type="nucleotide sequence ID" value="XM_013147281.1"/>
</dbReference>
<dbReference type="SMR" id="Q9WVG1"/>
<dbReference type="FunCoup" id="Q9WVG1">
    <property type="interactions" value="750"/>
</dbReference>
<dbReference type="STRING" id="10141.ENSCPOP00000001784"/>
<dbReference type="Ensembl" id="ENSCPOT00000001999.3">
    <property type="protein sequence ID" value="ENSCPOP00000001784.2"/>
    <property type="gene ID" value="ENSCPOG00000001975.4"/>
</dbReference>
<dbReference type="Ensembl" id="ENSCPOT00000032308.1">
    <property type="protein sequence ID" value="ENSCPOP00000022138.1"/>
    <property type="gene ID" value="ENSCPOG00000001975.4"/>
</dbReference>
<dbReference type="GeneID" id="100135556"/>
<dbReference type="KEGG" id="cpoc:100135556"/>
<dbReference type="CTD" id="3553"/>
<dbReference type="VEuPathDB" id="HostDB:ENSCPOG00000001975"/>
<dbReference type="eggNOG" id="ENOG502S3E9">
    <property type="taxonomic scope" value="Eukaryota"/>
</dbReference>
<dbReference type="GeneTree" id="ENSGT00950000182943"/>
<dbReference type="HOGENOM" id="CLU_083639_0_0_1"/>
<dbReference type="InParanoid" id="Q9WVG1"/>
<dbReference type="OMA" id="QKCLVMS"/>
<dbReference type="OrthoDB" id="9449069at2759"/>
<dbReference type="TreeFam" id="TF300203"/>
<dbReference type="Proteomes" id="UP000005447">
    <property type="component" value="Unassembled WGS sequence"/>
</dbReference>
<dbReference type="Bgee" id="ENSCPOG00000001975">
    <property type="expression patterns" value="Expressed in liver and 9 other cell types or tissues"/>
</dbReference>
<dbReference type="GO" id="GO:0005829">
    <property type="term" value="C:cytosol"/>
    <property type="evidence" value="ECO:0007669"/>
    <property type="project" value="UniProtKB-SubCell"/>
</dbReference>
<dbReference type="GO" id="GO:0005615">
    <property type="term" value="C:extracellular space"/>
    <property type="evidence" value="ECO:0007669"/>
    <property type="project" value="UniProtKB-KW"/>
</dbReference>
<dbReference type="GO" id="GO:0005764">
    <property type="term" value="C:lysosome"/>
    <property type="evidence" value="ECO:0007669"/>
    <property type="project" value="UniProtKB-SubCell"/>
</dbReference>
<dbReference type="GO" id="GO:0030141">
    <property type="term" value="C:secretory granule"/>
    <property type="evidence" value="ECO:0007669"/>
    <property type="project" value="Ensembl"/>
</dbReference>
<dbReference type="GO" id="GO:0005125">
    <property type="term" value="F:cytokine activity"/>
    <property type="evidence" value="ECO:0007669"/>
    <property type="project" value="UniProtKB-KW"/>
</dbReference>
<dbReference type="GO" id="GO:0005178">
    <property type="term" value="F:integrin binding"/>
    <property type="evidence" value="ECO:0000250"/>
    <property type="project" value="UniProtKB"/>
</dbReference>
<dbReference type="GO" id="GO:0005149">
    <property type="term" value="F:interleukin-1 receptor binding"/>
    <property type="evidence" value="ECO:0007669"/>
    <property type="project" value="InterPro"/>
</dbReference>
<dbReference type="GO" id="GO:0019904">
    <property type="term" value="F:protein domain specific binding"/>
    <property type="evidence" value="ECO:0007669"/>
    <property type="project" value="Ensembl"/>
</dbReference>
<dbReference type="GO" id="GO:0048143">
    <property type="term" value="P:astrocyte activation"/>
    <property type="evidence" value="ECO:0007669"/>
    <property type="project" value="Ensembl"/>
</dbReference>
<dbReference type="GO" id="GO:0097398">
    <property type="term" value="P:cellular response to interleukin-17"/>
    <property type="evidence" value="ECO:0007669"/>
    <property type="project" value="Ensembl"/>
</dbReference>
<dbReference type="GO" id="GO:0071222">
    <property type="term" value="P:cellular response to lipopolysaccharide"/>
    <property type="evidence" value="ECO:0007669"/>
    <property type="project" value="TreeGrafter"/>
</dbReference>
<dbReference type="GO" id="GO:0071260">
    <property type="term" value="P:cellular response to mechanical stimulus"/>
    <property type="evidence" value="ECO:0007669"/>
    <property type="project" value="Ensembl"/>
</dbReference>
<dbReference type="GO" id="GO:0071466">
    <property type="term" value="P:cellular response to xenobiotic stimulus"/>
    <property type="evidence" value="ECO:0007669"/>
    <property type="project" value="Ensembl"/>
</dbReference>
<dbReference type="GO" id="GO:0050830">
    <property type="term" value="P:defense response to Gram-positive bacterium"/>
    <property type="evidence" value="ECO:0007669"/>
    <property type="project" value="Ensembl"/>
</dbReference>
<dbReference type="GO" id="GO:0035234">
    <property type="term" value="P:ectopic germ cell programmed cell death"/>
    <property type="evidence" value="ECO:0007669"/>
    <property type="project" value="Ensembl"/>
</dbReference>
<dbReference type="GO" id="GO:0097192">
    <property type="term" value="P:extrinsic apoptotic signaling pathway in absence of ligand"/>
    <property type="evidence" value="ECO:0007669"/>
    <property type="project" value="Ensembl"/>
</dbReference>
<dbReference type="GO" id="GO:0001660">
    <property type="term" value="P:fever generation"/>
    <property type="evidence" value="ECO:0007669"/>
    <property type="project" value="UniProtKB-KW"/>
</dbReference>
<dbReference type="GO" id="GO:0030213">
    <property type="term" value="P:hyaluronan biosynthetic process"/>
    <property type="evidence" value="ECO:0007669"/>
    <property type="project" value="Ensembl"/>
</dbReference>
<dbReference type="GO" id="GO:0006955">
    <property type="term" value="P:immune response"/>
    <property type="evidence" value="ECO:0007669"/>
    <property type="project" value="InterPro"/>
</dbReference>
<dbReference type="GO" id="GO:0070498">
    <property type="term" value="P:interleukin-1-mediated signaling pathway"/>
    <property type="evidence" value="ECO:0007669"/>
    <property type="project" value="Ensembl"/>
</dbReference>
<dbReference type="GO" id="GO:0007254">
    <property type="term" value="P:JNK cascade"/>
    <property type="evidence" value="ECO:0007669"/>
    <property type="project" value="Ensembl"/>
</dbReference>
<dbReference type="GO" id="GO:0070487">
    <property type="term" value="P:monocyte aggregation"/>
    <property type="evidence" value="ECO:0007669"/>
    <property type="project" value="Ensembl"/>
</dbReference>
<dbReference type="GO" id="GO:0070164">
    <property type="term" value="P:negative regulation of adiponectin secretion"/>
    <property type="evidence" value="ECO:0007669"/>
    <property type="project" value="Ensembl"/>
</dbReference>
<dbReference type="GO" id="GO:0008285">
    <property type="term" value="P:negative regulation of cell population proliferation"/>
    <property type="evidence" value="ECO:0007669"/>
    <property type="project" value="Ensembl"/>
</dbReference>
<dbReference type="GO" id="GO:0010829">
    <property type="term" value="P:negative regulation of D-glucose transmembrane transport"/>
    <property type="evidence" value="ECO:0007669"/>
    <property type="project" value="Ensembl"/>
</dbReference>
<dbReference type="GO" id="GO:2001240">
    <property type="term" value="P:negative regulation of extrinsic apoptotic signaling pathway in absence of ligand"/>
    <property type="evidence" value="ECO:0007669"/>
    <property type="project" value="Ensembl"/>
</dbReference>
<dbReference type="GO" id="GO:1903597">
    <property type="term" value="P:negative regulation of gap junction assembly"/>
    <property type="evidence" value="ECO:0007669"/>
    <property type="project" value="Ensembl"/>
</dbReference>
<dbReference type="GO" id="GO:0046627">
    <property type="term" value="P:negative regulation of insulin receptor signaling pathway"/>
    <property type="evidence" value="ECO:0007669"/>
    <property type="project" value="Ensembl"/>
</dbReference>
<dbReference type="GO" id="GO:0050995">
    <property type="term" value="P:negative regulation of lipid catabolic process"/>
    <property type="evidence" value="ECO:0007669"/>
    <property type="project" value="Ensembl"/>
</dbReference>
<dbReference type="GO" id="GO:0043409">
    <property type="term" value="P:negative regulation of MAPK cascade"/>
    <property type="evidence" value="ECO:0007669"/>
    <property type="project" value="Ensembl"/>
</dbReference>
<dbReference type="GO" id="GO:0050805">
    <property type="term" value="P:negative regulation of synaptic transmission"/>
    <property type="evidence" value="ECO:0007669"/>
    <property type="project" value="Ensembl"/>
</dbReference>
<dbReference type="GO" id="GO:0030593">
    <property type="term" value="P:neutrophil chemotaxis"/>
    <property type="evidence" value="ECO:0007669"/>
    <property type="project" value="Ensembl"/>
</dbReference>
<dbReference type="GO" id="GO:0045766">
    <property type="term" value="P:positive regulation of angiogenesis"/>
    <property type="evidence" value="ECO:0007669"/>
    <property type="project" value="Ensembl"/>
</dbReference>
<dbReference type="GO" id="GO:0043123">
    <property type="term" value="P:positive regulation of canonical NF-kappaB signal transduction"/>
    <property type="evidence" value="ECO:0007669"/>
    <property type="project" value="Ensembl"/>
</dbReference>
<dbReference type="GO" id="GO:0051781">
    <property type="term" value="P:positive regulation of cell division"/>
    <property type="evidence" value="ECO:0007669"/>
    <property type="project" value="UniProtKB-KW"/>
</dbReference>
<dbReference type="GO" id="GO:0030335">
    <property type="term" value="P:positive regulation of cell migration"/>
    <property type="evidence" value="ECO:0007669"/>
    <property type="project" value="Ensembl"/>
</dbReference>
<dbReference type="GO" id="GO:0045917">
    <property type="term" value="P:positive regulation of complement activation"/>
    <property type="evidence" value="ECO:0007669"/>
    <property type="project" value="Ensembl"/>
</dbReference>
<dbReference type="GO" id="GO:0010718">
    <property type="term" value="P:positive regulation of epithelial to mesenchymal transition"/>
    <property type="evidence" value="ECO:0007669"/>
    <property type="project" value="Ensembl"/>
</dbReference>
<dbReference type="GO" id="GO:0070374">
    <property type="term" value="P:positive regulation of ERK1 and ERK2 cascade"/>
    <property type="evidence" value="ECO:0007669"/>
    <property type="project" value="Ensembl"/>
</dbReference>
<dbReference type="GO" id="GO:0031622">
    <property type="term" value="P:positive regulation of fever generation"/>
    <property type="evidence" value="ECO:0007669"/>
    <property type="project" value="Ensembl"/>
</dbReference>
<dbReference type="GO" id="GO:0060252">
    <property type="term" value="P:positive regulation of glial cell proliferation"/>
    <property type="evidence" value="ECO:0007669"/>
    <property type="project" value="Ensembl"/>
</dbReference>
<dbReference type="GO" id="GO:0032725">
    <property type="term" value="P:positive regulation of granulocyte macrophage colony-stimulating factor production"/>
    <property type="evidence" value="ECO:0007669"/>
    <property type="project" value="Ensembl"/>
</dbReference>
<dbReference type="GO" id="GO:0034116">
    <property type="term" value="P:positive regulation of heterotypic cell-cell adhesion"/>
    <property type="evidence" value="ECO:0007669"/>
    <property type="project" value="Ensembl"/>
</dbReference>
<dbReference type="GO" id="GO:0033092">
    <property type="term" value="P:positive regulation of immature T cell proliferation in thymus"/>
    <property type="evidence" value="ECO:0007669"/>
    <property type="project" value="TreeGrafter"/>
</dbReference>
<dbReference type="GO" id="GO:0032743">
    <property type="term" value="P:positive regulation of interleukin-2 production"/>
    <property type="evidence" value="ECO:0007669"/>
    <property type="project" value="Ensembl"/>
</dbReference>
<dbReference type="GO" id="GO:0032755">
    <property type="term" value="P:positive regulation of interleukin-6 production"/>
    <property type="evidence" value="ECO:0007669"/>
    <property type="project" value="Ensembl"/>
</dbReference>
<dbReference type="GO" id="GO:0032757">
    <property type="term" value="P:positive regulation of interleukin-8 production"/>
    <property type="evidence" value="ECO:0007669"/>
    <property type="project" value="Ensembl"/>
</dbReference>
<dbReference type="GO" id="GO:0046330">
    <property type="term" value="P:positive regulation of JNK cascade"/>
    <property type="evidence" value="ECO:0007669"/>
    <property type="project" value="Ensembl"/>
</dbReference>
<dbReference type="GO" id="GO:0050996">
    <property type="term" value="P:positive regulation of lipid catabolic process"/>
    <property type="evidence" value="ECO:0007669"/>
    <property type="project" value="Ensembl"/>
</dbReference>
<dbReference type="GO" id="GO:0010744">
    <property type="term" value="P:positive regulation of macrophage derived foam cell differentiation"/>
    <property type="evidence" value="ECO:0007669"/>
    <property type="project" value="Ensembl"/>
</dbReference>
<dbReference type="GO" id="GO:0051044">
    <property type="term" value="P:positive regulation of membrane protein ectodomain proteolysis"/>
    <property type="evidence" value="ECO:0007669"/>
    <property type="project" value="Ensembl"/>
</dbReference>
<dbReference type="GO" id="GO:0045840">
    <property type="term" value="P:positive regulation of mitotic nuclear division"/>
    <property type="evidence" value="ECO:0007669"/>
    <property type="project" value="Ensembl"/>
</dbReference>
<dbReference type="GO" id="GO:0071639">
    <property type="term" value="P:positive regulation of monocyte chemotactic protein-1 production"/>
    <property type="evidence" value="ECO:0007669"/>
    <property type="project" value="Ensembl"/>
</dbReference>
<dbReference type="GO" id="GO:0045429">
    <property type="term" value="P:positive regulation of nitric oxide biosynthetic process"/>
    <property type="evidence" value="ECO:0007669"/>
    <property type="project" value="Ensembl"/>
</dbReference>
<dbReference type="GO" id="GO:1901224">
    <property type="term" value="P:positive regulation of non-canonical NF-kappaB signal transduction"/>
    <property type="evidence" value="ECO:0007669"/>
    <property type="project" value="Ensembl"/>
</dbReference>
<dbReference type="GO" id="GO:1900745">
    <property type="term" value="P:positive regulation of p38MAPK cascade"/>
    <property type="evidence" value="ECO:0007669"/>
    <property type="project" value="Ensembl"/>
</dbReference>
<dbReference type="GO" id="GO:0051897">
    <property type="term" value="P:positive regulation of phosphatidylinositol 3-kinase/protein kinase B signal transduction"/>
    <property type="evidence" value="ECO:0007669"/>
    <property type="project" value="Ensembl"/>
</dbReference>
<dbReference type="GO" id="GO:0010641">
    <property type="term" value="P:positive regulation of platelet-derived growth factor receptor signaling pathway"/>
    <property type="evidence" value="ECO:0007669"/>
    <property type="project" value="Ensembl"/>
</dbReference>
<dbReference type="GO" id="GO:0031394">
    <property type="term" value="P:positive regulation of prostaglandin biosynthetic process"/>
    <property type="evidence" value="ECO:0007669"/>
    <property type="project" value="Ensembl"/>
</dbReference>
<dbReference type="GO" id="GO:0032308">
    <property type="term" value="P:positive regulation of prostaglandin secretion"/>
    <property type="evidence" value="ECO:0007669"/>
    <property type="project" value="Ensembl"/>
</dbReference>
<dbReference type="GO" id="GO:2000556">
    <property type="term" value="P:positive regulation of T-helper 1 cell cytokine production"/>
    <property type="evidence" value="ECO:0000250"/>
    <property type="project" value="UniProtKB"/>
</dbReference>
<dbReference type="GO" id="GO:1905075">
    <property type="term" value="P:positive regulation of tight junction disassembly"/>
    <property type="evidence" value="ECO:0007669"/>
    <property type="project" value="Ensembl"/>
</dbReference>
<dbReference type="GO" id="GO:0045944">
    <property type="term" value="P:positive regulation of transcription by RNA polymerase II"/>
    <property type="evidence" value="ECO:0007669"/>
    <property type="project" value="Ensembl"/>
</dbReference>
<dbReference type="GO" id="GO:0032729">
    <property type="term" value="P:positive regulation of type II interferon production"/>
    <property type="evidence" value="ECO:0000250"/>
    <property type="project" value="UniProtKB"/>
</dbReference>
<dbReference type="GO" id="GO:0010575">
    <property type="term" value="P:positive regulation of vascular endothelial growth factor production"/>
    <property type="evidence" value="ECO:0007669"/>
    <property type="project" value="Ensembl"/>
</dbReference>
<dbReference type="GO" id="GO:0050691">
    <property type="term" value="P:regulation of defense response to virus by host"/>
    <property type="evidence" value="ECO:0007669"/>
    <property type="project" value="Ensembl"/>
</dbReference>
<dbReference type="GO" id="GO:1903140">
    <property type="term" value="P:regulation of establishment of endothelial barrier"/>
    <property type="evidence" value="ECO:0007669"/>
    <property type="project" value="Ensembl"/>
</dbReference>
<dbReference type="GO" id="GO:0050796">
    <property type="term" value="P:regulation of insulin secretion"/>
    <property type="evidence" value="ECO:0007669"/>
    <property type="project" value="Ensembl"/>
</dbReference>
<dbReference type="GO" id="GO:0033198">
    <property type="term" value="P:response to ATP"/>
    <property type="evidence" value="ECO:0007669"/>
    <property type="project" value="Ensembl"/>
</dbReference>
<dbReference type="GO" id="GO:0009743">
    <property type="term" value="P:response to carbohydrate"/>
    <property type="evidence" value="ECO:0007669"/>
    <property type="project" value="Ensembl"/>
</dbReference>
<dbReference type="GO" id="GO:0010573">
    <property type="term" value="P:vascular endothelial growth factor production"/>
    <property type="evidence" value="ECO:0000250"/>
    <property type="project" value="UniProtKB"/>
</dbReference>
<dbReference type="CDD" id="cd23296">
    <property type="entry name" value="beta-trefoil_IL1B"/>
    <property type="match status" value="1"/>
</dbReference>
<dbReference type="FunFam" id="2.80.10.50:FF:000027">
    <property type="entry name" value="Interleukin-1 beta"/>
    <property type="match status" value="1"/>
</dbReference>
<dbReference type="Gene3D" id="2.80.10.50">
    <property type="match status" value="1"/>
</dbReference>
<dbReference type="InterPro" id="IPR020877">
    <property type="entry name" value="IL-1_CS"/>
</dbReference>
<dbReference type="InterPro" id="IPR000975">
    <property type="entry name" value="IL-1_fam"/>
</dbReference>
<dbReference type="InterPro" id="IPR003502">
    <property type="entry name" value="IL-1_propep"/>
</dbReference>
<dbReference type="InterPro" id="IPR008996">
    <property type="entry name" value="IL1/FGF"/>
</dbReference>
<dbReference type="PANTHER" id="PTHR10078:SF30">
    <property type="entry name" value="INTERLEUKIN-1 BETA"/>
    <property type="match status" value="1"/>
</dbReference>
<dbReference type="PANTHER" id="PTHR10078">
    <property type="entry name" value="INTERLEUKIN-1 FAMILY MEMBER"/>
    <property type="match status" value="1"/>
</dbReference>
<dbReference type="Pfam" id="PF00340">
    <property type="entry name" value="IL1"/>
    <property type="match status" value="1"/>
</dbReference>
<dbReference type="Pfam" id="PF02394">
    <property type="entry name" value="IL1_propep"/>
    <property type="match status" value="1"/>
</dbReference>
<dbReference type="PRINTS" id="PR00264">
    <property type="entry name" value="INTERLEUKIN1"/>
</dbReference>
<dbReference type="PRINTS" id="PR01359">
    <property type="entry name" value="INTRLEUKIN1B"/>
</dbReference>
<dbReference type="PRINTS" id="PR01357">
    <property type="entry name" value="INTRLEUKN1AB"/>
</dbReference>
<dbReference type="SMART" id="SM00125">
    <property type="entry name" value="IL1"/>
    <property type="match status" value="1"/>
</dbReference>
<dbReference type="SUPFAM" id="SSF50353">
    <property type="entry name" value="Cytokine"/>
    <property type="match status" value="1"/>
</dbReference>
<dbReference type="PROSITE" id="PS00253">
    <property type="entry name" value="INTERLEUKIN_1"/>
    <property type="match status" value="1"/>
</dbReference>
<name>IL1B_CAVPO</name>
<sequence length="266" mass="30531">MAAVPELSSEVTAYHSDENELFFEVDGPNKMQYCFQDRDLCSLDEGIKLQISHQHFNKSFRQTVSLIVAVEKLRKKLAPCTWAFQDDDLRPLLPFIFEEEPIVCDTWDEEYESDTPVPSRNCTLHDIQHKRLVLSDPCELKALHLNGDNLNRQVVFSMSFVQGERSDNKMPVALGLKGKNLYLSCVMKDGKPVLQLESVDGKQYPKKKMEKRFVFNKITSKSTVEFESAQFPNWYISTSQAEHKPVFLGNNNGQDIIDFKLELVSS</sequence>
<gene>
    <name type="primary">IL1B</name>
</gene>
<keyword id="KW-0202">Cytokine</keyword>
<keyword id="KW-0963">Cytoplasm</keyword>
<keyword id="KW-0395">Inflammatory response</keyword>
<keyword id="KW-0458">Lysosome</keyword>
<keyword id="KW-0497">Mitogen</keyword>
<keyword id="KW-0666">Pyrogen</keyword>
<keyword id="KW-1185">Reference proteome</keyword>
<keyword id="KW-0964">Secreted</keyword>
<reference key="1">
    <citation type="journal article" date="1999" name="Int. Arch. Allergy Immunol.">
        <title>Molecular cloning of the guinea pig GRO gene and its rapid expression in the tissues of lipopolysaccharide-injected guinea pigs.</title>
        <authorList>
            <person name="Yoshimura T."/>
            <person name="Takeya M."/>
            <person name="Ogata H."/>
            <person name="Yamashiro S."/>
            <person name="Modi W.S."/>
            <person name="Gillitzer R."/>
        </authorList>
    </citation>
    <scope>NUCLEOTIDE SEQUENCE [MRNA]</scope>
    <source>
        <strain>2</strain>
        <tissue>Spleen</tissue>
    </source>
</reference>
<feature type="propeptide" id="PRO_0000015289" evidence="1">
    <location>
        <begin position="1"/>
        <end position="114"/>
    </location>
</feature>
<feature type="chain" id="PRO_0000015290" description="Interleukin-1 beta">
    <location>
        <begin position="115"/>
        <end position="266"/>
    </location>
</feature>
<feature type="site" description="Important for interaction with integrin" evidence="2">
    <location>
        <position position="169"/>
    </location>
</feature>
<feature type="site" description="Important for interaction with integrin" evidence="2">
    <location>
        <position position="177"/>
    </location>
</feature>
<feature type="site" description="Important for interaction with integrin" evidence="2">
    <location>
        <position position="179"/>
    </location>
</feature>
<feature type="site" description="Important for interaction with integrin" evidence="2">
    <location>
        <position position="188"/>
    </location>
</feature>
<feature type="site" description="Important for interaction with integrin" evidence="2">
    <location>
        <position position="202"/>
    </location>
</feature>